<protein>
    <recommendedName>
        <fullName evidence="1">Non-structural protein 1</fullName>
        <shortName evidence="1">NS1</shortName>
    </recommendedName>
    <alternativeName>
        <fullName evidence="1">NS1A</fullName>
    </alternativeName>
</protein>
<reference key="1">
    <citation type="journal article" date="2004" name="Virology">
        <title>Genetic analysis of human H2N2 and early H3N2 influenza viruses, 1957-1972: evidence for genetic divergence and multiple reassortment events.</title>
        <authorList>
            <person name="Lindstrom S.E."/>
            <person name="Cox N.J."/>
            <person name="Klimov A."/>
        </authorList>
    </citation>
    <scope>NUCLEOTIDE SEQUENCE [GENOMIC RNA]</scope>
</reference>
<accession>Q6XSV4</accession>
<organism>
    <name type="scientific">Influenza A virus (strain A/Qu/7/1970 H3N2)</name>
    <dbReference type="NCBI Taxonomy" id="221016"/>
    <lineage>
        <taxon>Viruses</taxon>
        <taxon>Riboviria</taxon>
        <taxon>Orthornavirae</taxon>
        <taxon>Negarnaviricota</taxon>
        <taxon>Polyploviricotina</taxon>
        <taxon>Insthoviricetes</taxon>
        <taxon>Articulavirales</taxon>
        <taxon>Orthomyxoviridae</taxon>
        <taxon>Alphainfluenzavirus</taxon>
        <taxon>Alphainfluenzavirus influenzae</taxon>
        <taxon>Influenza A virus</taxon>
    </lineage>
</organism>
<name>NS1_I70A0</name>
<proteinExistence type="inferred from homology"/>
<sequence>MDSNTVSSFQVDCFLWHVRKQVVDQKLGDAPFLDRLRRDQKSLRGRGSTLGLNIEAATHVGKQIVERILKEESDEALKMTMASTPASRYLTDMTIEELSRDWFMLMPKQKVEGPLCIRIDQAIMDKNIMLKANFSVIFDRLETLILLRAFTEEGAIVGEISPLPSLPGHTIEDVKNAIGVLIGGLEWNDNTVRVSKTLQRFAWGSSNENGRPPLTPKQKRKMARTARSKVRRDKMAD</sequence>
<dbReference type="EMBL" id="AY210305">
    <property type="protein sequence ID" value="AAO46755.1"/>
    <property type="molecule type" value="Genomic_RNA"/>
</dbReference>
<dbReference type="SMR" id="Q6XSV4"/>
<dbReference type="GO" id="GO:0030430">
    <property type="term" value="C:host cell cytoplasm"/>
    <property type="evidence" value="ECO:0007669"/>
    <property type="project" value="UniProtKB-SubCell"/>
</dbReference>
<dbReference type="GO" id="GO:0042025">
    <property type="term" value="C:host cell nucleus"/>
    <property type="evidence" value="ECO:0007669"/>
    <property type="project" value="UniProtKB-SubCell"/>
</dbReference>
<dbReference type="GO" id="GO:0030291">
    <property type="term" value="F:protein serine/threonine kinase inhibitor activity"/>
    <property type="evidence" value="ECO:0007669"/>
    <property type="project" value="UniProtKB-KW"/>
</dbReference>
<dbReference type="GO" id="GO:0003723">
    <property type="term" value="F:RNA binding"/>
    <property type="evidence" value="ECO:0007669"/>
    <property type="project" value="UniProtKB-KW"/>
</dbReference>
<dbReference type="GO" id="GO:0039540">
    <property type="term" value="P:symbiont-mediated suppression of host cytoplasmic pattern recognition receptor signaling pathway via inhibition of RIG-I activity"/>
    <property type="evidence" value="ECO:0007669"/>
    <property type="project" value="UniProtKB-KW"/>
</dbReference>
<dbReference type="GO" id="GO:0039657">
    <property type="term" value="P:symbiont-mediated suppression of host gene expression"/>
    <property type="evidence" value="ECO:0007669"/>
    <property type="project" value="UniProtKB-KW"/>
</dbReference>
<dbReference type="GO" id="GO:0039524">
    <property type="term" value="P:symbiont-mediated suppression of host mRNA processing"/>
    <property type="evidence" value="ECO:0007669"/>
    <property type="project" value="UniProtKB-KW"/>
</dbReference>
<dbReference type="GO" id="GO:0039580">
    <property type="term" value="P:symbiont-mediated suppression of host PKR/eIFalpha signaling"/>
    <property type="evidence" value="ECO:0007669"/>
    <property type="project" value="UniProtKB-KW"/>
</dbReference>
<dbReference type="GO" id="GO:0039502">
    <property type="term" value="P:symbiont-mediated suppression of host type I interferon-mediated signaling pathway"/>
    <property type="evidence" value="ECO:0007669"/>
    <property type="project" value="UniProtKB-KW"/>
</dbReference>
<dbReference type="FunFam" id="1.10.287.10:FF:000001">
    <property type="entry name" value="Non-structural protein 1"/>
    <property type="match status" value="1"/>
</dbReference>
<dbReference type="FunFam" id="3.30.420.330:FF:000001">
    <property type="entry name" value="Non-structural protein 1"/>
    <property type="match status" value="1"/>
</dbReference>
<dbReference type="Gene3D" id="3.30.420.330">
    <property type="entry name" value="Influenza virus non-structural protein, effector domain"/>
    <property type="match status" value="1"/>
</dbReference>
<dbReference type="Gene3D" id="1.10.287.10">
    <property type="entry name" value="S15/NS1, RNA-binding"/>
    <property type="match status" value="1"/>
</dbReference>
<dbReference type="HAMAP" id="MF_04066">
    <property type="entry name" value="INFV_NS1"/>
    <property type="match status" value="1"/>
</dbReference>
<dbReference type="InterPro" id="IPR004208">
    <property type="entry name" value="NS1"/>
</dbReference>
<dbReference type="InterPro" id="IPR000256">
    <property type="entry name" value="NS1A"/>
</dbReference>
<dbReference type="InterPro" id="IPR038064">
    <property type="entry name" value="NS1A_effect_dom-like_sf"/>
</dbReference>
<dbReference type="InterPro" id="IPR009068">
    <property type="entry name" value="uS15_NS1_RNA-bd_sf"/>
</dbReference>
<dbReference type="Pfam" id="PF00600">
    <property type="entry name" value="Flu_NS1"/>
    <property type="match status" value="1"/>
</dbReference>
<dbReference type="SUPFAM" id="SSF143021">
    <property type="entry name" value="Ns1 effector domain-like"/>
    <property type="match status" value="1"/>
</dbReference>
<dbReference type="SUPFAM" id="SSF47060">
    <property type="entry name" value="S15/NS1 RNA-binding domain"/>
    <property type="match status" value="1"/>
</dbReference>
<keyword id="KW-0025">Alternative splicing</keyword>
<keyword id="KW-1262">Eukaryotic host gene expression shutoff by virus</keyword>
<keyword id="KW-1035">Host cytoplasm</keyword>
<keyword id="KW-1190">Host gene expression shutoff by virus</keyword>
<keyword id="KW-1192">Host mRNA suppression by virus</keyword>
<keyword id="KW-1048">Host nucleus</keyword>
<keyword id="KW-0945">Host-virus interaction</keyword>
<keyword id="KW-1090">Inhibition of host innate immune response by virus</keyword>
<keyword id="KW-1114">Inhibition of host interferon signaling pathway by virus</keyword>
<keyword id="KW-1102">Inhibition of host PKR by virus</keyword>
<keyword id="KW-1103">Inhibition of host pre-mRNA processing by virus</keyword>
<keyword id="KW-1088">Inhibition of host RIG-I by virus</keyword>
<keyword id="KW-1113">Inhibition of host RLR pathway by virus</keyword>
<keyword id="KW-0922">Interferon antiviral system evasion</keyword>
<keyword id="KW-0694">RNA-binding</keyword>
<keyword id="KW-0832">Ubl conjugation</keyword>
<keyword id="KW-0899">Viral immunoevasion</keyword>
<evidence type="ECO:0000255" key="1">
    <source>
        <dbReference type="HAMAP-Rule" id="MF_04066"/>
    </source>
</evidence>
<evidence type="ECO:0000256" key="2">
    <source>
        <dbReference type="SAM" id="MobiDB-lite"/>
    </source>
</evidence>
<feature type="chain" id="PRO_0000324248" description="Non-structural protein 1">
    <location>
        <begin position="1"/>
        <end position="237"/>
    </location>
</feature>
<feature type="region of interest" description="RNA-binding and homodimerization" evidence="1">
    <location>
        <begin position="1"/>
        <end position="73"/>
    </location>
</feature>
<feature type="region of interest" description="CPSF4-binding" evidence="1">
    <location>
        <begin position="180"/>
        <end position="215"/>
    </location>
</feature>
<feature type="region of interest" description="Disordered" evidence="2">
    <location>
        <begin position="205"/>
        <end position="237"/>
    </location>
</feature>
<feature type="region of interest" description="PABPN1-binding" evidence="1">
    <location>
        <begin position="223"/>
        <end position="230"/>
    </location>
</feature>
<feature type="short sequence motif" description="Nuclear localization signal" evidence="1">
    <location>
        <begin position="34"/>
        <end position="38"/>
    </location>
</feature>
<feature type="short sequence motif" description="Nuclear export signal" evidence="1">
    <location>
        <begin position="137"/>
        <end position="146"/>
    </location>
</feature>
<feature type="compositionally biased region" description="Basic residues" evidence="2">
    <location>
        <begin position="217"/>
        <end position="237"/>
    </location>
</feature>
<comment type="function">
    <text evidence="1">Inhibits post-transcriptional processing of cellular pre-mRNA, by binding and inhibiting two cellular proteins that are required for the 3'-end processing of cellular pre-mRNAs: the 30 kDa cleavage and polyadenylation specificity factor/CPSF4 and the poly(A)-binding protein 2/PABPN1. In turn, unprocessed 3' end pre-mRNAs accumulate in the host nucleus and are no longer exported to the cytoplasm. Cellular protein synthesis is thereby shut off very early after virus infection. Viral protein synthesis is not affected by the inhibition of the cellular 3' end processing machinery because the poly(A) tails of viral mRNAs are produced by the viral polymerase through a stuttering mechanism. Prevents the establishment of the cellular antiviral state by inhibiting TRIM25-mediated RIGI ubiquitination, which normally triggers the antiviral transduction signal that leads to the activation of type I IFN genes by transcription factors IRF3 and IRF7. Also binds poly(A) and U6 snRNA. Inhibits the integrated stress response (ISR) in the infected cell by blocking dsRNA binding by EIF2AK2/PKR and further phosphorylation of EIF2S1/EIF-2ALPHA. Stress granule formation is thus inhibited, which allows protein synthesis and viral replication.</text>
</comment>
<comment type="subunit">
    <text evidence="1">Homodimer. Interacts with host TRIM25 (via coiled coil); this interaction specifically inhibits TRIM25 multimerization and TRIM25-mediated RIGI CARD ubiquitination. Interacts with human EIF2AK2/PKR, CPSF4, IVNS1ABP and PABPN1.</text>
</comment>
<comment type="subcellular location">
    <subcellularLocation>
        <location evidence="1">Host nucleus</location>
    </subcellularLocation>
    <subcellularLocation>
        <location evidence="1">Host cytoplasm</location>
    </subcellularLocation>
    <text evidence="1">In uninfected, transfected cells, NS1 is localized in the nucleus. Only in virus infected cells, the nuclear export signal is unveiled, presumably by a viral protein, and a fraction of NS1 is exported in the cytoplasm.</text>
</comment>
<comment type="alternative products">
    <event type="alternative splicing"/>
    <isoform>
        <id>Q6XSV4-1</id>
        <name>NS1</name>
        <sequence type="displayed"/>
    </isoform>
    <isoform>
        <id>Q6XSV5-1</id>
        <name>NEP</name>
        <name>NS2</name>
        <sequence type="external"/>
    </isoform>
</comment>
<comment type="domain">
    <text evidence="1">The dsRNA-binding region is required for suppression of RNA silencing.</text>
</comment>
<comment type="PTM">
    <text evidence="1">Upon interferon induction, ISGylated via host HERC5; this results in the impairment of NS1 interaction with RNA targets due to its inability to form homodimers and to interact with host EIF2AK2/PKR.</text>
</comment>
<comment type="similarity">
    <text evidence="1">Belongs to the influenza A viruses NS1 family.</text>
</comment>
<gene>
    <name evidence="1" type="primary">NS</name>
</gene>
<organismHost>
    <name type="scientific">Aves</name>
    <dbReference type="NCBI Taxonomy" id="8782"/>
</organismHost>
<organismHost>
    <name type="scientific">Cetacea</name>
    <name type="common">whales</name>
    <dbReference type="NCBI Taxonomy" id="9721"/>
</organismHost>
<organismHost>
    <name type="scientific">Homo sapiens</name>
    <name type="common">Human</name>
    <dbReference type="NCBI Taxonomy" id="9606"/>
</organismHost>
<organismHost>
    <name type="scientific">Phocidae</name>
    <name type="common">true seals</name>
    <dbReference type="NCBI Taxonomy" id="9709"/>
</organismHost>
<organismHost>
    <name type="scientific">Sus scrofa</name>
    <name type="common">Pig</name>
    <dbReference type="NCBI Taxonomy" id="9823"/>
</organismHost>